<sequence length="107" mass="12413">MDLNNRLTEDETLEQAYDIFLELAGDNLDPADILLFNLQFEERGGAELFDPAEDWQEHVDFDINPDFFAEVVIGLADSDGEEINDIFARVLLCREKDHKLCHILWKE</sequence>
<proteinExistence type="inferred from homology"/>
<accession>Q66AM0</accession>
<gene>
    <name type="ordered locus">YPTB2110</name>
</gene>
<protein>
    <recommendedName>
        <fullName evidence="1">Putative double-stranded DNA mimic protein YPTB2110</fullName>
    </recommendedName>
</protein>
<organism>
    <name type="scientific">Yersinia pseudotuberculosis serotype I (strain IP32953)</name>
    <dbReference type="NCBI Taxonomy" id="273123"/>
    <lineage>
        <taxon>Bacteria</taxon>
        <taxon>Pseudomonadati</taxon>
        <taxon>Pseudomonadota</taxon>
        <taxon>Gammaproteobacteria</taxon>
        <taxon>Enterobacterales</taxon>
        <taxon>Yersiniaceae</taxon>
        <taxon>Yersinia</taxon>
    </lineage>
</organism>
<comment type="function">
    <text evidence="1">May act as a double-stranded DNA (dsDNA) mimic. Probably regulates the activity of a dsDNA-binding protein.</text>
</comment>
<comment type="similarity">
    <text evidence="1">Belongs to the putative dsDNA mimic protein family.</text>
</comment>
<feature type="chain" id="PRO_1000044917" description="Putative double-stranded DNA mimic protein YPTB2110">
    <location>
        <begin position="1"/>
        <end position="107"/>
    </location>
</feature>
<dbReference type="EMBL" id="BX936398">
    <property type="protein sequence ID" value="CAH21348.1"/>
    <property type="molecule type" value="Genomic_DNA"/>
</dbReference>
<dbReference type="RefSeq" id="WP_002210649.1">
    <property type="nucleotide sequence ID" value="NZ_CP009712.1"/>
</dbReference>
<dbReference type="SMR" id="Q66AM0"/>
<dbReference type="KEGG" id="ypo:BZ17_351"/>
<dbReference type="KEGG" id="yps:YPTB2110"/>
<dbReference type="PATRIC" id="fig|273123.14.peg.374"/>
<dbReference type="Proteomes" id="UP000001011">
    <property type="component" value="Chromosome"/>
</dbReference>
<dbReference type="Gene3D" id="3.10.450.140">
    <property type="entry name" value="dsDNA mimic, putative"/>
    <property type="match status" value="1"/>
</dbReference>
<dbReference type="HAMAP" id="MF_00680">
    <property type="entry name" value="Put_dsDNA_mimic"/>
    <property type="match status" value="1"/>
</dbReference>
<dbReference type="InterPro" id="IPR007376">
    <property type="entry name" value="dsDNA_mimic_put"/>
</dbReference>
<dbReference type="InterPro" id="IPR036763">
    <property type="entry name" value="Put_dsDNA_mimic_sf"/>
</dbReference>
<dbReference type="NCBIfam" id="NF003469">
    <property type="entry name" value="PRK05094.1"/>
    <property type="match status" value="1"/>
</dbReference>
<dbReference type="Pfam" id="PF04269">
    <property type="entry name" value="DUF440"/>
    <property type="match status" value="1"/>
</dbReference>
<dbReference type="PIRSF" id="PIRSF004916">
    <property type="entry name" value="UCP004916"/>
    <property type="match status" value="1"/>
</dbReference>
<dbReference type="SUPFAM" id="SSF102816">
    <property type="entry name" value="Putative dsDNA mimic"/>
    <property type="match status" value="1"/>
</dbReference>
<name>Y2110_YERPS</name>
<reference key="1">
    <citation type="journal article" date="2004" name="Proc. Natl. Acad. Sci. U.S.A.">
        <title>Insights into the evolution of Yersinia pestis through whole-genome comparison with Yersinia pseudotuberculosis.</title>
        <authorList>
            <person name="Chain P.S.G."/>
            <person name="Carniel E."/>
            <person name="Larimer F.W."/>
            <person name="Lamerdin J."/>
            <person name="Stoutland P.O."/>
            <person name="Regala W.M."/>
            <person name="Georgescu A.M."/>
            <person name="Vergez L.M."/>
            <person name="Land M.L."/>
            <person name="Motin V.L."/>
            <person name="Brubaker R.R."/>
            <person name="Fowler J."/>
            <person name="Hinnebusch J."/>
            <person name="Marceau M."/>
            <person name="Medigue C."/>
            <person name="Simonet M."/>
            <person name="Chenal-Francisque V."/>
            <person name="Souza B."/>
            <person name="Dacheux D."/>
            <person name="Elliott J.M."/>
            <person name="Derbise A."/>
            <person name="Hauser L.J."/>
            <person name="Garcia E."/>
        </authorList>
    </citation>
    <scope>NUCLEOTIDE SEQUENCE [LARGE SCALE GENOMIC DNA]</scope>
    <source>
        <strain>IP32953</strain>
    </source>
</reference>
<evidence type="ECO:0000255" key="1">
    <source>
        <dbReference type="HAMAP-Rule" id="MF_00680"/>
    </source>
</evidence>